<accession>Q5RAK8</accession>
<comment type="function">
    <text evidence="2 3">Transcriptional activator which forms a core component of the circadian clock. The circadian clock, an internal time-keeping system, regulates various physiological processes through the generation of approximately 24 hour circadian rhythms in gene expression, which are translated into rhythms in metabolism and behavior. It is derived from the Latin roots 'circa' (about) and 'diem' (day) and acts as an important regulator of a wide array of physiological functions including metabolism, sleep, body temperature, blood pressure, endocrine, immune, cardiovascular, and renal function. Consists of two major components: the central clock, residing in the suprachiasmatic nucleus (SCN) of the brain, and the peripheral clocks that are present in nearly every tissue and organ system. Both the central and peripheral clocks can be reset by environmental cues, also known as Zeitgebers (German for 'timegivers'). The predominant Zeitgeber for the central clock is light, which is sensed by retina and signals directly to the SCN. The central clock entrains the peripheral clocks through neuronal and hormonal signals, body temperature and feeding-related cues, aligning all clocks with the external light/dark cycle. Circadian rhythms allow an organism to achieve temporal homeostasis with its environment at the molecular level by regulating gene expression to create a peak of protein expression once every 24 hours to control when a particular physiological process is most active with respect to the solar day. Transcription and translation of core clock components (CLOCK, NPAS2, BMAL1, BMAL2, PER1, PER2, PER3, CRY1 and CRY2) plays a critical role in rhythm generation, whereas delays imposed by post-translational modifications (PTMs) are important for determining the period (tau) of the rhythms (tau refers to the period of a rhythm and is the length, in time, of one complete cycle). A diurnal rhythm is synchronized with the day/night cycle, while the ultradian and infradian rhythms have a period shorter and longer than 24 hours, respectively. Disruptions in the circadian rhythms contribute to the pathology of cardiovascular diseases, cancer, metabolic syndromes and aging. A transcription/translation feedback loop (TTFL) forms the core of the molecular circadian clock mechanism. Transcription factors, CLOCK or NPAS2 and BMAL1 or BMAL2, form the positive limb of the feedback loop, act in the form of a heterodimer and activate the transcription of core clock genes and clock-controlled genes (involved in key metabolic processes), harboring E-box elements (5'-CACGTG-3') within their promoters. The core clock genes: PER1/2/3 and CRY1/2 which are transcriptional repressors form the negative limb of the feedback loop and interact with the CLOCK|NPAS2-BMAL1|BMAL2 heterodimer inhibiting its activity and thereby negatively regulating their own expression. This heterodimer also activates nuclear receptors NR1D1/2 and RORA/B/G, which form a second feedback loop and which activate and repress BMAL1 transcription, respectively. Regulates the circadian expression of ICAM1, VCAM1, CCL2, THPO and MPL and also acts as an enhancer of the transactivation potential of NF-kappaB. Plays an important role in the homeostatic regulation of sleep. The CLOCK-BMAL1 heterodimer regulates the circadian expression of SERPINE1/PAI1, VWF, B3, CCRN4L/NOC, NAMPT, DBP, MYOD1, PPARGC1A, PPARGC1B, SIRT1, GYS2, F7, NGFR, GNRHR, BHLHE40/DEC1, ATF4, MTA1, KLF10 and also genes implicated in glucose and lipid metabolism. Promotes rhythmic chromatin opening, regulating the DNA accessibility of other transcription factors. The CLOCK-BMAL2 heterodimer activates the transcription of SERPINE1/PAI1 and BHLHE40/DEC1. The preferred binding motif for the CLOCK-BMAL1 heterodimer is 5'-CACGTGA-3', which contains a flanking adenine nucleotide at the 3-prime end of the canonical 6-nucleotide E-box sequence. CLOCK specifically binds to the half-site 5'-CAC-3', while BMAL1 binds to the half-site 5'-GTGA-3'. The CLOCK-BMAL1 heterodimer also recognizes the non-canonical E-box motifs 5'-AACGTGA-3' and 5'-CATGTGA-3'. CLOCK has an intrinsic acetyltransferase activity, which enables circadian chromatin remodeling by acetylating histones and nonhistone proteins, including its own partner BMAL1. Represses glucocorticoid receptor NR3C1/GR-induced transcriptional activity by reducing the association of NR3C1/GR to glucocorticoid response elements (GREs) via the acetylation of multiple lysine residues located in its hinge region. The acetyltransferase activity of CLOCK is as important as its transcription activity in circadian control. Acetylates metabolic enzymes IMPDH2 and NDUFA9 in a circadian manner. Facilitated by BMAL1, rhythmically interacts and acetylates argininosuccinate synthase 1 (ASS1) leading to enzymatic inhibition of ASS1 as well as the circadian oscillation of arginine biosynthesis and subsequent ureagenesis (By similarity). Drives the circadian rhythm of blood pressure through transcriptional activation of ATP1B1 (By similarity).</text>
</comment>
<comment type="catalytic activity">
    <reaction>
        <text>L-lysyl-[protein] + acetyl-CoA = N(6)-acetyl-L-lysyl-[protein] + CoA + H(+)</text>
        <dbReference type="Rhea" id="RHEA:45948"/>
        <dbReference type="Rhea" id="RHEA-COMP:9752"/>
        <dbReference type="Rhea" id="RHEA-COMP:10731"/>
        <dbReference type="ChEBI" id="CHEBI:15378"/>
        <dbReference type="ChEBI" id="CHEBI:29969"/>
        <dbReference type="ChEBI" id="CHEBI:57287"/>
        <dbReference type="ChEBI" id="CHEBI:57288"/>
        <dbReference type="ChEBI" id="CHEBI:61930"/>
        <dbReference type="EC" id="2.3.1.48"/>
    </reaction>
</comment>
<comment type="subunit">
    <text evidence="2 3">Component of the circadian clock oscillator which includes the CRY proteins, CLOCK or NPAS2, BMAL1 or BMAL2, CSNK1D and/or CSNK1E, TIMELESS and the PER proteins (By similarity). Forms a heterodimer with BMAL1 (By similarity). The CLOCK-BMAL1 heterodimer is required for E-box-dependent transactivation, for CLOCK nuclear translocation and degradation, and for phosphorylation of both CLOCK and BMAL1 (By similarity). Interacts with NR3C1 in a ligand-dependent fashion (By similarity). Interacts with ESR1 and estrogen stimulates this interaction (By similarity). Interacts with the complex p35/CDK5 (By similarity). Interacts with RELA/p65 (By similarity). Interacts with KAT2B, CREBBP and EP300 (By similarity). Interacts with ID1 and ID3 (By similarity). Interacts with ID2 (By similarity). Interacts with MTA1 (By similarity). Interacts with OGA (By similarity). Interacts with SIRT1 (By similarity). Interacts with CIPC (By similarity). Interacts with EZH2 (By similarity). Interacts with EIF4E, PIWIL1 and DDX4 (By similarity). Interacts with PER1, PER2, CRY1 and CRY2 and this interaction requires a translocation to the nucleus (By similarity). Interaction of the CLOCK-BMAL1 heterodimer with PER or CRY inhibits transcription activation (By similarity). Interaction of the CLOCK-BMAL1 with CRY1 is independent of DNA but with PER2 is off DNA (By similarity). The CLOCK-BMAL1 heterodimer interacts with GSK3B (By similarity). Interacts with KDM5A (By similarity). Interacts with KMT2A; in a circadian manner (By similarity). Interacts with MYBBP1A (By similarity). Interacts with THRAP3 (By similarity). Interacts with MED1; this interaction requires the presence of THRAP3 (By similarity). Interacts with NCOA2 (By similarity). The CLOCK-BMAL1 heterodimer interacts with PASD1. Interacts with ASS1 and IMPDH2; in a circadian manner. Interacts with NDUFA9 (By similarity). Interacts with PIWIL2 (via PIWI domain) (By similarity). Interacts with HNF4A (By similarity).</text>
</comment>
<comment type="subcellular location">
    <subcellularLocation>
        <location evidence="2">Cytoplasm</location>
    </subcellularLocation>
    <subcellularLocation>
        <location evidence="5">Nucleus</location>
    </subcellularLocation>
    <subcellularLocation>
        <location evidence="3">Cytoplasm</location>
        <location evidence="3">Cytosol</location>
    </subcellularLocation>
    <text evidence="2">Localizes to sites of DNA damage in a H2AX-independent manner. Shuttling between the cytoplasm and the nucleus is under circadian regulation and is BMAL1-dependent. Phosphorylated form located in the nucleus while the nonphosphorylated form found only in the cytoplasm. Sequestered to the cytoplasm in the presence of ID2.</text>
</comment>
<comment type="PTM">
    <text evidence="2">Ubiquitinated, leading to its proteasomal degradation.</text>
</comment>
<comment type="PTM">
    <text evidence="2">O-glycosylated; contains O-GlcNAc. O-glycosylation by OGT prevents protein degradation by inhibiting ubiquitination. It also stabilizes the CLOCK-BMAL1 heterodimer thereby increasing CLOCK-BMAL1-mediated transcriptional activation of PER1/2/3 and CRY1/2.</text>
</comment>
<comment type="PTM">
    <text evidence="2">Phosphorylation is dependent on the CLOCK-BMAL1 heterodimer formation. Phosphorylation enhances the transcriptional activity, alters the subcellular localization and decreases the stability of the heterodimer by promoting its degradation. Phosphorylation shows circadian variations in the liver. May be phosphorylated by CSNK1D and CKSN1E (By similarity).</text>
</comment>
<comment type="PTM">
    <text evidence="2">Sumoylation enhances its transcriptional activity and interaction with ESR1, resulting in up-regulation of ESR1 activity. Estrogen stimulates sumoylation. Desumoylation by SENP1 negatively regulates its transcriptional activity.</text>
</comment>
<comment type="PTM">
    <text evidence="2">Undergoes lysosome-mediated degradation in a time-dependent manner in the liver.</text>
</comment>
<keyword id="KW-0010">Activator</keyword>
<keyword id="KW-0090">Biological rhythms</keyword>
<keyword id="KW-0963">Cytoplasm</keyword>
<keyword id="KW-0227">DNA damage</keyword>
<keyword id="KW-0238">DNA-binding</keyword>
<keyword id="KW-1017">Isopeptide bond</keyword>
<keyword id="KW-0539">Nucleus</keyword>
<keyword id="KW-0597">Phosphoprotein</keyword>
<keyword id="KW-1185">Reference proteome</keyword>
<keyword id="KW-0677">Repeat</keyword>
<keyword id="KW-0804">Transcription</keyword>
<keyword id="KW-0805">Transcription regulation</keyword>
<keyword id="KW-0808">Transferase</keyword>
<keyword id="KW-0832">Ubl conjugation</keyword>
<feature type="chain" id="PRO_0000262637" description="Circadian locomoter output cycles protein kaput">
    <location>
        <begin position="1"/>
        <end position="846"/>
    </location>
</feature>
<feature type="domain" description="bHLH" evidence="5">
    <location>
        <begin position="34"/>
        <end position="84"/>
    </location>
</feature>
<feature type="domain" description="PAS 1" evidence="4">
    <location>
        <begin position="107"/>
        <end position="177"/>
    </location>
</feature>
<feature type="domain" description="PAS 2" evidence="4">
    <location>
        <begin position="262"/>
        <end position="332"/>
    </location>
</feature>
<feature type="domain" description="PAC">
    <location>
        <begin position="336"/>
        <end position="379"/>
    </location>
</feature>
<feature type="region of interest" description="Interaction with NR3C1" evidence="2">
    <location>
        <begin position="371"/>
        <end position="845"/>
    </location>
</feature>
<feature type="region of interest" description="Disordered" evidence="6">
    <location>
        <begin position="420"/>
        <end position="495"/>
    </location>
</feature>
<feature type="region of interest" description="Interaction with SIRT1" evidence="2">
    <location>
        <begin position="450"/>
        <end position="570"/>
    </location>
</feature>
<feature type="region of interest" description="Implicated in the circadian rhythmicity" evidence="1">
    <location>
        <begin position="514"/>
        <end position="564"/>
    </location>
</feature>
<feature type="region of interest" description="Disordered" evidence="6">
    <location>
        <begin position="624"/>
        <end position="654"/>
    </location>
</feature>
<feature type="region of interest" description="Disordered" evidence="6">
    <location>
        <begin position="764"/>
        <end position="783"/>
    </location>
</feature>
<feature type="region of interest" description="Disordered" evidence="6">
    <location>
        <begin position="811"/>
        <end position="846"/>
    </location>
</feature>
<feature type="short sequence motif" description="Nuclear localization signal" evidence="2">
    <location>
        <begin position="32"/>
        <end position="47"/>
    </location>
</feature>
<feature type="compositionally biased region" description="Polar residues" evidence="6">
    <location>
        <begin position="447"/>
        <end position="463"/>
    </location>
</feature>
<feature type="compositionally biased region" description="Low complexity" evidence="6">
    <location>
        <begin position="478"/>
        <end position="493"/>
    </location>
</feature>
<feature type="compositionally biased region" description="Low complexity" evidence="6">
    <location>
        <begin position="624"/>
        <end position="637"/>
    </location>
</feature>
<feature type="compositionally biased region" description="Low complexity" evidence="6">
    <location>
        <begin position="644"/>
        <end position="654"/>
    </location>
</feature>
<feature type="compositionally biased region" description="Low complexity" evidence="6">
    <location>
        <begin position="811"/>
        <end position="829"/>
    </location>
</feature>
<feature type="site" description="Interaction with E-box DNA" evidence="3">
    <location>
        <position position="39"/>
    </location>
</feature>
<feature type="site" description="Interaction with E-box DNA" evidence="3">
    <location>
        <position position="43"/>
    </location>
</feature>
<feature type="site" description="Interaction with E-box DNA" evidence="3">
    <location>
        <position position="47"/>
    </location>
</feature>
<feature type="site" description="Important for interaction with BMAL1" evidence="3">
    <location>
        <position position="84"/>
    </location>
</feature>
<feature type="modified residue" description="Phosphoserine" evidence="2">
    <location>
        <position position="38"/>
    </location>
</feature>
<feature type="modified residue" description="Phosphoserine" evidence="2">
    <location>
        <position position="42"/>
    </location>
</feature>
<feature type="modified residue" description="Phosphoserine" evidence="2">
    <location>
        <position position="408"/>
    </location>
</feature>
<feature type="modified residue" description="Phosphoserine; by GSK3-beta" evidence="2">
    <location>
        <position position="427"/>
    </location>
</feature>
<feature type="modified residue" description="Phosphoserine" evidence="2">
    <location>
        <position position="431"/>
    </location>
</feature>
<feature type="modified residue" description="Phosphothreonine; by CDK5" evidence="3">
    <location>
        <position position="451"/>
    </location>
</feature>
<feature type="modified residue" description="Phosphothreonine; by CDK5" evidence="3">
    <location>
        <position position="461"/>
    </location>
</feature>
<feature type="cross-link" description="Glycyl lysine isopeptide (Lys-Gly) (interchain with G-Cter in SUMO); alternate" evidence="2">
    <location>
        <position position="67"/>
    </location>
</feature>
<feature type="cross-link" description="Glycyl lysine isopeptide (Lys-Gly) (interchain with G-Cter in SUMO1); alternate" evidence="2">
    <location>
        <position position="67"/>
    </location>
</feature>
<feature type="cross-link" description="Glycyl lysine isopeptide (Lys-Gly) (interchain with G-Cter in SUMO1)" evidence="2">
    <location>
        <position position="842"/>
    </location>
</feature>
<protein>
    <recommendedName>
        <fullName>Circadian locomoter output cycles protein kaput</fullName>
        <ecNumber>2.3.1.48</ecNumber>
    </recommendedName>
</protein>
<organism>
    <name type="scientific">Pongo abelii</name>
    <name type="common">Sumatran orangutan</name>
    <name type="synonym">Pongo pygmaeus abelii</name>
    <dbReference type="NCBI Taxonomy" id="9601"/>
    <lineage>
        <taxon>Eukaryota</taxon>
        <taxon>Metazoa</taxon>
        <taxon>Chordata</taxon>
        <taxon>Craniata</taxon>
        <taxon>Vertebrata</taxon>
        <taxon>Euteleostomi</taxon>
        <taxon>Mammalia</taxon>
        <taxon>Eutheria</taxon>
        <taxon>Euarchontoglires</taxon>
        <taxon>Primates</taxon>
        <taxon>Haplorrhini</taxon>
        <taxon>Catarrhini</taxon>
        <taxon>Hominidae</taxon>
        <taxon>Pongo</taxon>
    </lineage>
</organism>
<dbReference type="EC" id="2.3.1.48"/>
<dbReference type="EMBL" id="CR859007">
    <property type="protein sequence ID" value="CAH91202.1"/>
    <property type="molecule type" value="mRNA"/>
</dbReference>
<dbReference type="RefSeq" id="NP_001125706.1">
    <property type="nucleotide sequence ID" value="NM_001132234.2"/>
</dbReference>
<dbReference type="SMR" id="Q5RAK8"/>
<dbReference type="STRING" id="9601.ENSPPYP00000016487"/>
<dbReference type="GeneID" id="100172630"/>
<dbReference type="KEGG" id="pon:100172630"/>
<dbReference type="CTD" id="9575"/>
<dbReference type="eggNOG" id="KOG3561">
    <property type="taxonomic scope" value="Eukaryota"/>
</dbReference>
<dbReference type="InParanoid" id="Q5RAK8"/>
<dbReference type="OrthoDB" id="411251at2759"/>
<dbReference type="Proteomes" id="UP000001595">
    <property type="component" value="Unplaced"/>
</dbReference>
<dbReference type="GO" id="GO:0033391">
    <property type="term" value="C:chromatoid body"/>
    <property type="evidence" value="ECO:0000250"/>
    <property type="project" value="UniProtKB"/>
</dbReference>
<dbReference type="GO" id="GO:1990513">
    <property type="term" value="C:CLOCK-BMAL transcription complex"/>
    <property type="evidence" value="ECO:0007669"/>
    <property type="project" value="TreeGrafter"/>
</dbReference>
<dbReference type="GO" id="GO:0005829">
    <property type="term" value="C:cytosol"/>
    <property type="evidence" value="ECO:0000250"/>
    <property type="project" value="UniProtKB"/>
</dbReference>
<dbReference type="GO" id="GO:0005634">
    <property type="term" value="C:nucleus"/>
    <property type="evidence" value="ECO:0000250"/>
    <property type="project" value="UniProtKB"/>
</dbReference>
<dbReference type="GO" id="GO:0005667">
    <property type="term" value="C:transcription regulator complex"/>
    <property type="evidence" value="ECO:0000250"/>
    <property type="project" value="UniProtKB"/>
</dbReference>
<dbReference type="GO" id="GO:0031490">
    <property type="term" value="F:chromatin DNA binding"/>
    <property type="evidence" value="ECO:0000250"/>
    <property type="project" value="UniProtKB"/>
</dbReference>
<dbReference type="GO" id="GO:0003677">
    <property type="term" value="F:DNA binding"/>
    <property type="evidence" value="ECO:0000250"/>
    <property type="project" value="UniProtKB"/>
</dbReference>
<dbReference type="GO" id="GO:0003700">
    <property type="term" value="F:DNA-binding transcription factor activity"/>
    <property type="evidence" value="ECO:0000250"/>
    <property type="project" value="UniProtKB"/>
</dbReference>
<dbReference type="GO" id="GO:0000981">
    <property type="term" value="F:DNA-binding transcription factor activity, RNA polymerase II-specific"/>
    <property type="evidence" value="ECO:0007669"/>
    <property type="project" value="InterPro"/>
</dbReference>
<dbReference type="GO" id="GO:0070888">
    <property type="term" value="F:E-box binding"/>
    <property type="evidence" value="ECO:0000250"/>
    <property type="project" value="UniProtKB"/>
</dbReference>
<dbReference type="GO" id="GO:0004402">
    <property type="term" value="F:histone acetyltransferase activity"/>
    <property type="evidence" value="ECO:0000250"/>
    <property type="project" value="UniProtKB"/>
</dbReference>
<dbReference type="GO" id="GO:0046983">
    <property type="term" value="F:protein dimerization activity"/>
    <property type="evidence" value="ECO:0007669"/>
    <property type="project" value="InterPro"/>
</dbReference>
<dbReference type="GO" id="GO:0000978">
    <property type="term" value="F:RNA polymerase II cis-regulatory region sequence-specific DNA binding"/>
    <property type="evidence" value="ECO:0000250"/>
    <property type="project" value="UniProtKB"/>
</dbReference>
<dbReference type="GO" id="GO:0043565">
    <property type="term" value="F:sequence-specific DNA binding"/>
    <property type="evidence" value="ECO:0000250"/>
    <property type="project" value="UniProtKB"/>
</dbReference>
<dbReference type="GO" id="GO:0032922">
    <property type="term" value="P:circadian regulation of gene expression"/>
    <property type="evidence" value="ECO:0000250"/>
    <property type="project" value="UniProtKB"/>
</dbReference>
<dbReference type="GO" id="GO:0006974">
    <property type="term" value="P:DNA damage response"/>
    <property type="evidence" value="ECO:0007669"/>
    <property type="project" value="UniProtKB-KW"/>
</dbReference>
<dbReference type="GO" id="GO:0045892">
    <property type="term" value="P:negative regulation of DNA-templated transcription"/>
    <property type="evidence" value="ECO:0000250"/>
    <property type="project" value="UniProtKB"/>
</dbReference>
<dbReference type="GO" id="GO:2000323">
    <property type="term" value="P:negative regulation of nuclear receptor-mediated glucocorticoid signaling pathway"/>
    <property type="evidence" value="ECO:0000250"/>
    <property type="project" value="UniProtKB"/>
</dbReference>
<dbReference type="GO" id="GO:0045893">
    <property type="term" value="P:positive regulation of DNA-templated transcription"/>
    <property type="evidence" value="ECO:0000250"/>
    <property type="project" value="UniProtKB"/>
</dbReference>
<dbReference type="GO" id="GO:0051092">
    <property type="term" value="P:positive regulation of NF-kappaB transcription factor activity"/>
    <property type="evidence" value="ECO:0000250"/>
    <property type="project" value="UniProtKB"/>
</dbReference>
<dbReference type="GO" id="GO:0043161">
    <property type="term" value="P:proteasome-mediated ubiquitin-dependent protein catabolic process"/>
    <property type="evidence" value="ECO:0000250"/>
    <property type="project" value="UniProtKB"/>
</dbReference>
<dbReference type="GO" id="GO:0006473">
    <property type="term" value="P:protein acetylation"/>
    <property type="evidence" value="ECO:0000250"/>
    <property type="project" value="UniProtKB"/>
</dbReference>
<dbReference type="GO" id="GO:0042752">
    <property type="term" value="P:regulation of circadian rhythm"/>
    <property type="evidence" value="ECO:0000250"/>
    <property type="project" value="UniProtKB"/>
</dbReference>
<dbReference type="GO" id="GO:0006355">
    <property type="term" value="P:regulation of DNA-templated transcription"/>
    <property type="evidence" value="ECO:0000250"/>
    <property type="project" value="UniProtKB"/>
</dbReference>
<dbReference type="GO" id="GO:0042634">
    <property type="term" value="P:regulation of hair cycle"/>
    <property type="evidence" value="ECO:0000250"/>
    <property type="project" value="UniProtKB"/>
</dbReference>
<dbReference type="GO" id="GO:0050796">
    <property type="term" value="P:regulation of insulin secretion"/>
    <property type="evidence" value="ECO:0000250"/>
    <property type="project" value="UniProtKB"/>
</dbReference>
<dbReference type="GO" id="GO:2000074">
    <property type="term" value="P:regulation of type B pancreatic cell development"/>
    <property type="evidence" value="ECO:0000250"/>
    <property type="project" value="UniProtKB"/>
</dbReference>
<dbReference type="GO" id="GO:0051775">
    <property type="term" value="P:response to redox state"/>
    <property type="evidence" value="ECO:0000250"/>
    <property type="project" value="UniProtKB"/>
</dbReference>
<dbReference type="GO" id="GO:0007283">
    <property type="term" value="P:spermatogenesis"/>
    <property type="evidence" value="ECO:0000250"/>
    <property type="project" value="UniProtKB"/>
</dbReference>
<dbReference type="CDD" id="cd19734">
    <property type="entry name" value="bHLH-PAS_CLOCK"/>
    <property type="match status" value="1"/>
</dbReference>
<dbReference type="CDD" id="cd00130">
    <property type="entry name" value="PAS"/>
    <property type="match status" value="2"/>
</dbReference>
<dbReference type="FunFam" id="3.30.450.20:FF:000016">
    <property type="entry name" value="Circadian locomoter output cycles protein"/>
    <property type="match status" value="1"/>
</dbReference>
<dbReference type="FunFam" id="4.10.280.10:FF:000013">
    <property type="entry name" value="Circadian locomoter output cycles protein kaput"/>
    <property type="match status" value="1"/>
</dbReference>
<dbReference type="FunFam" id="3.30.450.20:FF:000022">
    <property type="entry name" value="circadian locomoter output cycles protein kaput"/>
    <property type="match status" value="1"/>
</dbReference>
<dbReference type="Gene3D" id="4.10.280.10">
    <property type="entry name" value="Helix-loop-helix DNA-binding domain"/>
    <property type="match status" value="1"/>
</dbReference>
<dbReference type="Gene3D" id="3.30.450.20">
    <property type="entry name" value="PAS domain"/>
    <property type="match status" value="2"/>
</dbReference>
<dbReference type="InterPro" id="IPR011598">
    <property type="entry name" value="bHLH_dom"/>
</dbReference>
<dbReference type="InterPro" id="IPR047230">
    <property type="entry name" value="CLOCK-like"/>
</dbReference>
<dbReference type="InterPro" id="IPR036638">
    <property type="entry name" value="HLH_DNA-bd_sf"/>
</dbReference>
<dbReference type="InterPro" id="IPR001067">
    <property type="entry name" value="Nuc_translocat"/>
</dbReference>
<dbReference type="InterPro" id="IPR001610">
    <property type="entry name" value="PAC"/>
</dbReference>
<dbReference type="InterPro" id="IPR000014">
    <property type="entry name" value="PAS"/>
</dbReference>
<dbReference type="InterPro" id="IPR035965">
    <property type="entry name" value="PAS-like_dom_sf"/>
</dbReference>
<dbReference type="InterPro" id="IPR013767">
    <property type="entry name" value="PAS_fold"/>
</dbReference>
<dbReference type="PANTHER" id="PTHR46055">
    <property type="entry name" value="CIRCADIAN LOCOMOTER OUTPUT CYCLES PROTEIN KAPUT"/>
    <property type="match status" value="1"/>
</dbReference>
<dbReference type="PANTHER" id="PTHR46055:SF2">
    <property type="entry name" value="CIRCADIAN LOCOMOTER OUTPUT CYCLES PROTEIN KAPUT"/>
    <property type="match status" value="1"/>
</dbReference>
<dbReference type="Pfam" id="PF00010">
    <property type="entry name" value="HLH"/>
    <property type="match status" value="1"/>
</dbReference>
<dbReference type="Pfam" id="PF00989">
    <property type="entry name" value="PAS"/>
    <property type="match status" value="1"/>
</dbReference>
<dbReference type="Pfam" id="PF14598">
    <property type="entry name" value="PAS_11"/>
    <property type="match status" value="1"/>
</dbReference>
<dbReference type="PRINTS" id="PR00785">
    <property type="entry name" value="NCTRNSLOCATR"/>
</dbReference>
<dbReference type="SMART" id="SM00353">
    <property type="entry name" value="HLH"/>
    <property type="match status" value="1"/>
</dbReference>
<dbReference type="SMART" id="SM00086">
    <property type="entry name" value="PAC"/>
    <property type="match status" value="1"/>
</dbReference>
<dbReference type="SMART" id="SM00091">
    <property type="entry name" value="PAS"/>
    <property type="match status" value="2"/>
</dbReference>
<dbReference type="SUPFAM" id="SSF47459">
    <property type="entry name" value="HLH, helix-loop-helix DNA-binding domain"/>
    <property type="match status" value="1"/>
</dbReference>
<dbReference type="SUPFAM" id="SSF55785">
    <property type="entry name" value="PYP-like sensor domain (PAS domain)"/>
    <property type="match status" value="2"/>
</dbReference>
<dbReference type="PROSITE" id="PS50888">
    <property type="entry name" value="BHLH"/>
    <property type="match status" value="1"/>
</dbReference>
<dbReference type="PROSITE" id="PS50112">
    <property type="entry name" value="PAS"/>
    <property type="match status" value="2"/>
</dbReference>
<proteinExistence type="evidence at transcript level"/>
<gene>
    <name type="primary">CLOCK</name>
</gene>
<name>CLOCK_PONAB</name>
<reference key="1">
    <citation type="submission" date="2004-11" db="EMBL/GenBank/DDBJ databases">
        <authorList>
            <consortium name="The German cDNA consortium"/>
        </authorList>
    </citation>
    <scope>NUCLEOTIDE SEQUENCE [LARGE SCALE MRNA]</scope>
    <source>
        <tissue>Kidney</tissue>
    </source>
</reference>
<sequence length="846" mass="95354">MLFTVSCSKMSSIVDRDDSSIFDGLVEEDDKDKAKRVSRNKSEKKRRDQFNVLIKELGSMLPGNARKMDKSTVLQKSIDFLRKHKEITAQSDASEIRQDWKPTFLSNEEFTQLMLEALDGFFLAIMTDGSIIYVSESVTSLLEHLPSDLVDQSIFNFIPEGEHSEVYKILSTHLLESDSLTPEYLKSKNQLEFCCHMLRGTIDPKEPSTYEYVKFIGNFKSLNSVSSSAHNGFEGTIQRTHRPSYEDRVCFVATVRLATPQFIKEMCTVEEPNEEFASRHSLEWKFLFLDHRAPPIIGYLPFEVLGTSGYDYYHVDDLENLAKCHEHLMQYGKGKSCYYRFLTKGQQWIWLQTHYYITYHQWNSRPEFIVCTHTVVSYAEVRAERRRELSIEESLPEIAADKSQDSGSDNRINTVSLKEALERFDHSPTPSASSRSSRKSSHTAVSDPSSTPTKIPTDTSTPPRQHLPAHEKMVQRRSSFSSQSINSQSVGSSLTQPVMSQATNLPIPQGMSQFQFSAQLGAMQHLKDQLEQRTRMIEANIHRQQEELRKIQEQLQMVHGQGLQMFLQQPNPGLNFGSVQLSSGNSSNIQQLAPINMQGQVVPTNQIQSGMNTGHIGTTQHMIQQQTLQSTSTQSQQNVLSGHSQQTSLPSQTQSTLTAPLYNTMVISQPAAGSMVQIPSSMPQNSTQSAAVTTFTQDRQIRFSQGQQLVTKLVTAPVACGAVMVPSTMLMGQVVTAYPTFATQQQQSQTLSVTQQRQQQSSQEQQLTSVQQPSQAQLTQPPQQFLQTSRLLHGNPSTQLILSAAFPLQQSTFPQSHHQQHQSQQQQQLSRHRTDSLPDPSKVQPQ</sequence>
<evidence type="ECO:0000250" key="1"/>
<evidence type="ECO:0000250" key="2">
    <source>
        <dbReference type="UniProtKB" id="O08785"/>
    </source>
</evidence>
<evidence type="ECO:0000250" key="3">
    <source>
        <dbReference type="UniProtKB" id="O15516"/>
    </source>
</evidence>
<evidence type="ECO:0000255" key="4">
    <source>
        <dbReference type="PROSITE-ProRule" id="PRU00140"/>
    </source>
</evidence>
<evidence type="ECO:0000255" key="5">
    <source>
        <dbReference type="PROSITE-ProRule" id="PRU00981"/>
    </source>
</evidence>
<evidence type="ECO:0000256" key="6">
    <source>
        <dbReference type="SAM" id="MobiDB-lite"/>
    </source>
</evidence>